<gene>
    <name type="ordered locus">At4g21770</name>
    <name type="ORF">F17L22.230</name>
</gene>
<proteinExistence type="evidence at transcript level"/>
<keyword id="KW-0150">Chloroplast</keyword>
<keyword id="KW-0413">Isomerase</keyword>
<keyword id="KW-0934">Plastid</keyword>
<keyword id="KW-1185">Reference proteome</keyword>
<keyword id="KW-0694">RNA-binding</keyword>
<keyword id="KW-0809">Transit peptide</keyword>
<feature type="transit peptide" description="Chloroplast" evidence="2">
    <location>
        <begin position="1"/>
        <end position="66"/>
    </location>
</feature>
<feature type="chain" id="PRO_0000371426" description="RNA pseudouridine synthase 6, chloroplastic">
    <location>
        <begin position="67"/>
        <end position="472"/>
    </location>
</feature>
<feature type="domain" description="S4 RNA-binding">
    <location>
        <begin position="101"/>
        <end position="208"/>
    </location>
</feature>
<feature type="active site" evidence="1">
    <location>
        <position position="261"/>
    </location>
</feature>
<sequence length="472" mass="52938">MASPALTGGYRNLTAPVSLLRTLASTRVTTPLFRSNKHSPRFISSPKRFTCLSLLKTDSQNQTTLSSSSNSGYHEYNRLMPCPAYNLPPRIEHMVVLEDDVLVSEFISKQLDLPPLYVADLIRFGAVHYALVCPKPPPTATPEEIILFEEVTSPSVLKKRSSIKGKTVREAQKTFRVTHTNQYAEAGTYLRVHVHPKRSPRCYEIDWKSRIVAVTDSYVILDKPAGTTVGGTTDNIEESCATFASRALDLPEPLKTTHQIDNCTEGCVVFARTKEYCSVFHTKIRNKEVKKLYRALAAAPLPIGIISHYMRPKNMAPRLVAEDSIQGWHLCQLEVLECKKIPWPDAATEKKHDIEDCGWTSKEFAYECTINLLTGKTHQIRAQLAACGAPLVGDSMYMPAAIAEMGNPDTNPYGKAKKHYTMEENQKETAVAEWIDRHGKEPRVGIGLQACQISWDDDDGEHFYEAGTPWWR</sequence>
<evidence type="ECO:0000250" key="1"/>
<evidence type="ECO:0000255" key="2"/>
<evidence type="ECO:0000305" key="3"/>
<protein>
    <recommendedName>
        <fullName>RNA pseudouridine synthase 6, chloroplastic</fullName>
        <ecNumber>5.4.99.-</ecNumber>
    </recommendedName>
    <alternativeName>
        <fullName>RNA pseudouridylate synthase 6</fullName>
    </alternativeName>
    <alternativeName>
        <fullName>RNA-uridine isomerase 6</fullName>
    </alternativeName>
</protein>
<dbReference type="EC" id="5.4.99.-"/>
<dbReference type="EMBL" id="AL035527">
    <property type="protein sequence ID" value="CAB36821.1"/>
    <property type="molecule type" value="Genomic_DNA"/>
</dbReference>
<dbReference type="EMBL" id="AL161555">
    <property type="protein sequence ID" value="CAB81284.1"/>
    <property type="molecule type" value="Genomic_DNA"/>
</dbReference>
<dbReference type="EMBL" id="CP002687">
    <property type="protein sequence ID" value="AEE84501.1"/>
    <property type="molecule type" value="Genomic_DNA"/>
</dbReference>
<dbReference type="EMBL" id="AY142506">
    <property type="protein sequence ID" value="AAN13057.1"/>
    <property type="molecule type" value="mRNA"/>
</dbReference>
<dbReference type="EMBL" id="AK226645">
    <property type="protein sequence ID" value="BAE98756.1"/>
    <property type="molecule type" value="mRNA"/>
</dbReference>
<dbReference type="PIR" id="T05852">
    <property type="entry name" value="T05852"/>
</dbReference>
<dbReference type="RefSeq" id="NP_193908.1">
    <property type="nucleotide sequence ID" value="NM_118297.5"/>
</dbReference>
<dbReference type="FunCoup" id="Q9SVS0">
    <property type="interactions" value="605"/>
</dbReference>
<dbReference type="STRING" id="3702.Q9SVS0"/>
<dbReference type="GlyGen" id="Q9SVS0">
    <property type="glycosylation" value="1 site"/>
</dbReference>
<dbReference type="PaxDb" id="3702-AT4G21770.1"/>
<dbReference type="ProteomicsDB" id="225931"/>
<dbReference type="EnsemblPlants" id="AT4G21770.1">
    <property type="protein sequence ID" value="AT4G21770.1"/>
    <property type="gene ID" value="AT4G21770"/>
</dbReference>
<dbReference type="GeneID" id="828265"/>
<dbReference type="Gramene" id="AT4G21770.1">
    <property type="protein sequence ID" value="AT4G21770.1"/>
    <property type="gene ID" value="AT4G21770"/>
</dbReference>
<dbReference type="KEGG" id="ath:AT4G21770"/>
<dbReference type="Araport" id="AT4G21770"/>
<dbReference type="TAIR" id="AT4G21770"/>
<dbReference type="eggNOG" id="KOG1919">
    <property type="taxonomic scope" value="Eukaryota"/>
</dbReference>
<dbReference type="HOGENOM" id="CLU_055064_0_0_1"/>
<dbReference type="InParanoid" id="Q9SVS0"/>
<dbReference type="PhylomeDB" id="Q9SVS0"/>
<dbReference type="PRO" id="PR:Q9SVS0"/>
<dbReference type="Proteomes" id="UP000006548">
    <property type="component" value="Chromosome 4"/>
</dbReference>
<dbReference type="ExpressionAtlas" id="Q9SVS0">
    <property type="expression patterns" value="baseline and differential"/>
</dbReference>
<dbReference type="GO" id="GO:0009507">
    <property type="term" value="C:chloroplast"/>
    <property type="evidence" value="ECO:0007669"/>
    <property type="project" value="UniProtKB-SubCell"/>
</dbReference>
<dbReference type="GO" id="GO:0009982">
    <property type="term" value="F:pseudouridine synthase activity"/>
    <property type="evidence" value="ECO:0000304"/>
    <property type="project" value="TAIR"/>
</dbReference>
<dbReference type="GO" id="GO:0003723">
    <property type="term" value="F:RNA binding"/>
    <property type="evidence" value="ECO:0007669"/>
    <property type="project" value="UniProtKB-KW"/>
</dbReference>
<dbReference type="GO" id="GO:0001522">
    <property type="term" value="P:pseudouridine synthesis"/>
    <property type="evidence" value="ECO:0007669"/>
    <property type="project" value="InterPro"/>
</dbReference>
<dbReference type="CDD" id="cd02869">
    <property type="entry name" value="PseudoU_synth_RluA_like"/>
    <property type="match status" value="1"/>
</dbReference>
<dbReference type="FunFam" id="3.30.2350.10:FF:000052">
    <property type="entry name" value="RNA pseudouridine synthase 6, chloroplastic"/>
    <property type="match status" value="1"/>
</dbReference>
<dbReference type="Gene3D" id="3.30.2350.10">
    <property type="entry name" value="Pseudouridine synthase"/>
    <property type="match status" value="1"/>
</dbReference>
<dbReference type="InterPro" id="IPR020103">
    <property type="entry name" value="PsdUridine_synth_cat_dom_sf"/>
</dbReference>
<dbReference type="InterPro" id="IPR006145">
    <property type="entry name" value="PsdUridine_synth_RsuA/RluA"/>
</dbReference>
<dbReference type="InterPro" id="IPR050188">
    <property type="entry name" value="RluA_PseudoU_synthase"/>
</dbReference>
<dbReference type="PANTHER" id="PTHR21600">
    <property type="entry name" value="MITOCHONDRIAL RNA PSEUDOURIDINE SYNTHASE"/>
    <property type="match status" value="1"/>
</dbReference>
<dbReference type="PANTHER" id="PTHR21600:SF52">
    <property type="entry name" value="PSEUDOURIDINE SYNTHASE RSUA_RLUA-LIKE DOMAIN-CONTAINING PROTEIN"/>
    <property type="match status" value="1"/>
</dbReference>
<dbReference type="Pfam" id="PF00849">
    <property type="entry name" value="PseudoU_synth_2"/>
    <property type="match status" value="1"/>
</dbReference>
<dbReference type="SUPFAM" id="SSF55120">
    <property type="entry name" value="Pseudouridine synthase"/>
    <property type="match status" value="1"/>
</dbReference>
<accession>Q9SVS0</accession>
<comment type="catalytic activity">
    <reaction>
        <text>a uridine in RNA = a pseudouridine in RNA</text>
        <dbReference type="Rhea" id="RHEA:48348"/>
        <dbReference type="Rhea" id="RHEA-COMP:12068"/>
        <dbReference type="Rhea" id="RHEA-COMP:12069"/>
        <dbReference type="ChEBI" id="CHEBI:65314"/>
        <dbReference type="ChEBI" id="CHEBI:65315"/>
    </reaction>
</comment>
<comment type="subcellular location">
    <subcellularLocation>
        <location evidence="3">Plastid</location>
        <location evidence="3">Chloroplast</location>
    </subcellularLocation>
</comment>
<comment type="similarity">
    <text evidence="3">Belongs to the pseudouridine synthase RluA family.</text>
</comment>
<organism>
    <name type="scientific">Arabidopsis thaliana</name>
    <name type="common">Mouse-ear cress</name>
    <dbReference type="NCBI Taxonomy" id="3702"/>
    <lineage>
        <taxon>Eukaryota</taxon>
        <taxon>Viridiplantae</taxon>
        <taxon>Streptophyta</taxon>
        <taxon>Embryophyta</taxon>
        <taxon>Tracheophyta</taxon>
        <taxon>Spermatophyta</taxon>
        <taxon>Magnoliopsida</taxon>
        <taxon>eudicotyledons</taxon>
        <taxon>Gunneridae</taxon>
        <taxon>Pentapetalae</taxon>
        <taxon>rosids</taxon>
        <taxon>malvids</taxon>
        <taxon>Brassicales</taxon>
        <taxon>Brassicaceae</taxon>
        <taxon>Camelineae</taxon>
        <taxon>Arabidopsis</taxon>
    </lineage>
</organism>
<name>PUS6_ARATH</name>
<reference key="1">
    <citation type="journal article" date="1999" name="Nature">
        <title>Sequence and analysis of chromosome 4 of the plant Arabidopsis thaliana.</title>
        <authorList>
            <person name="Mayer K.F.X."/>
            <person name="Schueller C."/>
            <person name="Wambutt R."/>
            <person name="Murphy G."/>
            <person name="Volckaert G."/>
            <person name="Pohl T."/>
            <person name="Duesterhoeft A."/>
            <person name="Stiekema W."/>
            <person name="Entian K.-D."/>
            <person name="Terryn N."/>
            <person name="Harris B."/>
            <person name="Ansorge W."/>
            <person name="Brandt P."/>
            <person name="Grivell L.A."/>
            <person name="Rieger M."/>
            <person name="Weichselgartner M."/>
            <person name="de Simone V."/>
            <person name="Obermaier B."/>
            <person name="Mache R."/>
            <person name="Mueller M."/>
            <person name="Kreis M."/>
            <person name="Delseny M."/>
            <person name="Puigdomenech P."/>
            <person name="Watson M."/>
            <person name="Schmidtheini T."/>
            <person name="Reichert B."/>
            <person name="Portetelle D."/>
            <person name="Perez-Alonso M."/>
            <person name="Boutry M."/>
            <person name="Bancroft I."/>
            <person name="Vos P."/>
            <person name="Hoheisel J."/>
            <person name="Zimmermann W."/>
            <person name="Wedler H."/>
            <person name="Ridley P."/>
            <person name="Langham S.-A."/>
            <person name="McCullagh B."/>
            <person name="Bilham L."/>
            <person name="Robben J."/>
            <person name="van der Schueren J."/>
            <person name="Grymonprez B."/>
            <person name="Chuang Y.-J."/>
            <person name="Vandenbussche F."/>
            <person name="Braeken M."/>
            <person name="Weltjens I."/>
            <person name="Voet M."/>
            <person name="Bastiaens I."/>
            <person name="Aert R."/>
            <person name="Defoor E."/>
            <person name="Weitzenegger T."/>
            <person name="Bothe G."/>
            <person name="Ramsperger U."/>
            <person name="Hilbert H."/>
            <person name="Braun M."/>
            <person name="Holzer E."/>
            <person name="Brandt A."/>
            <person name="Peters S."/>
            <person name="van Staveren M."/>
            <person name="Dirkse W."/>
            <person name="Mooijman P."/>
            <person name="Klein Lankhorst R."/>
            <person name="Rose M."/>
            <person name="Hauf J."/>
            <person name="Koetter P."/>
            <person name="Berneiser S."/>
            <person name="Hempel S."/>
            <person name="Feldpausch M."/>
            <person name="Lamberth S."/>
            <person name="Van den Daele H."/>
            <person name="De Keyser A."/>
            <person name="Buysshaert C."/>
            <person name="Gielen J."/>
            <person name="Villarroel R."/>
            <person name="De Clercq R."/>
            <person name="van Montagu M."/>
            <person name="Rogers J."/>
            <person name="Cronin A."/>
            <person name="Quail M.A."/>
            <person name="Bray-Allen S."/>
            <person name="Clark L."/>
            <person name="Doggett J."/>
            <person name="Hall S."/>
            <person name="Kay M."/>
            <person name="Lennard N."/>
            <person name="McLay K."/>
            <person name="Mayes R."/>
            <person name="Pettett A."/>
            <person name="Rajandream M.A."/>
            <person name="Lyne M."/>
            <person name="Benes V."/>
            <person name="Rechmann S."/>
            <person name="Borkova D."/>
            <person name="Bloecker H."/>
            <person name="Scharfe M."/>
            <person name="Grimm M."/>
            <person name="Loehnert T.-H."/>
            <person name="Dose S."/>
            <person name="de Haan M."/>
            <person name="Maarse A.C."/>
            <person name="Schaefer M."/>
            <person name="Mueller-Auer S."/>
            <person name="Gabel C."/>
            <person name="Fuchs M."/>
            <person name="Fartmann B."/>
            <person name="Granderath K."/>
            <person name="Dauner D."/>
            <person name="Herzl A."/>
            <person name="Neumann S."/>
            <person name="Argiriou A."/>
            <person name="Vitale D."/>
            <person name="Liguori R."/>
            <person name="Piravandi E."/>
            <person name="Massenet O."/>
            <person name="Quigley F."/>
            <person name="Clabauld G."/>
            <person name="Muendlein A."/>
            <person name="Felber R."/>
            <person name="Schnabl S."/>
            <person name="Hiller R."/>
            <person name="Schmidt W."/>
            <person name="Lecharny A."/>
            <person name="Aubourg S."/>
            <person name="Chefdor F."/>
            <person name="Cooke R."/>
            <person name="Berger C."/>
            <person name="Monfort A."/>
            <person name="Casacuberta E."/>
            <person name="Gibbons T."/>
            <person name="Weber N."/>
            <person name="Vandenbol M."/>
            <person name="Bargues M."/>
            <person name="Terol J."/>
            <person name="Torres A."/>
            <person name="Perez-Perez A."/>
            <person name="Purnelle B."/>
            <person name="Bent E."/>
            <person name="Johnson S."/>
            <person name="Tacon D."/>
            <person name="Jesse T."/>
            <person name="Heijnen L."/>
            <person name="Schwarz S."/>
            <person name="Scholler P."/>
            <person name="Heber S."/>
            <person name="Francs P."/>
            <person name="Bielke C."/>
            <person name="Frishman D."/>
            <person name="Haase D."/>
            <person name="Lemcke K."/>
            <person name="Mewes H.-W."/>
            <person name="Stocker S."/>
            <person name="Zaccaria P."/>
            <person name="Bevan M."/>
            <person name="Wilson R.K."/>
            <person name="de la Bastide M."/>
            <person name="Habermann K."/>
            <person name="Parnell L."/>
            <person name="Dedhia N."/>
            <person name="Gnoj L."/>
            <person name="Schutz K."/>
            <person name="Huang E."/>
            <person name="Spiegel L."/>
            <person name="Sekhon M."/>
            <person name="Murray J."/>
            <person name="Sheet P."/>
            <person name="Cordes M."/>
            <person name="Abu-Threideh J."/>
            <person name="Stoneking T."/>
            <person name="Kalicki J."/>
            <person name="Graves T."/>
            <person name="Harmon G."/>
            <person name="Edwards J."/>
            <person name="Latreille P."/>
            <person name="Courtney L."/>
            <person name="Cloud J."/>
            <person name="Abbott A."/>
            <person name="Scott K."/>
            <person name="Johnson D."/>
            <person name="Minx P."/>
            <person name="Bentley D."/>
            <person name="Fulton B."/>
            <person name="Miller N."/>
            <person name="Greco T."/>
            <person name="Kemp K."/>
            <person name="Kramer J."/>
            <person name="Fulton L."/>
            <person name="Mardis E."/>
            <person name="Dante M."/>
            <person name="Pepin K."/>
            <person name="Hillier L.W."/>
            <person name="Nelson J."/>
            <person name="Spieth J."/>
            <person name="Ryan E."/>
            <person name="Andrews S."/>
            <person name="Geisel C."/>
            <person name="Layman D."/>
            <person name="Du H."/>
            <person name="Ali J."/>
            <person name="Berghoff A."/>
            <person name="Jones K."/>
            <person name="Drone K."/>
            <person name="Cotton M."/>
            <person name="Joshu C."/>
            <person name="Antonoiu B."/>
            <person name="Zidanic M."/>
            <person name="Strong C."/>
            <person name="Sun H."/>
            <person name="Lamar B."/>
            <person name="Yordan C."/>
            <person name="Ma P."/>
            <person name="Zhong J."/>
            <person name="Preston R."/>
            <person name="Vil D."/>
            <person name="Shekher M."/>
            <person name="Matero A."/>
            <person name="Shah R."/>
            <person name="Swaby I.K."/>
            <person name="O'Shaughnessy A."/>
            <person name="Rodriguez M."/>
            <person name="Hoffman J."/>
            <person name="Till S."/>
            <person name="Granat S."/>
            <person name="Shohdy N."/>
            <person name="Hasegawa A."/>
            <person name="Hameed A."/>
            <person name="Lodhi M."/>
            <person name="Johnson A."/>
            <person name="Chen E."/>
            <person name="Marra M.A."/>
            <person name="Martienssen R."/>
            <person name="McCombie W.R."/>
        </authorList>
    </citation>
    <scope>NUCLEOTIDE SEQUENCE [LARGE SCALE GENOMIC DNA]</scope>
    <source>
        <strain>cv. Columbia</strain>
    </source>
</reference>
<reference key="2">
    <citation type="journal article" date="2017" name="Plant J.">
        <title>Araport11: a complete reannotation of the Arabidopsis thaliana reference genome.</title>
        <authorList>
            <person name="Cheng C.Y."/>
            <person name="Krishnakumar V."/>
            <person name="Chan A.P."/>
            <person name="Thibaud-Nissen F."/>
            <person name="Schobel S."/>
            <person name="Town C.D."/>
        </authorList>
    </citation>
    <scope>GENOME REANNOTATION</scope>
    <source>
        <strain>cv. Columbia</strain>
    </source>
</reference>
<reference key="3">
    <citation type="journal article" date="2003" name="Science">
        <title>Empirical analysis of transcriptional activity in the Arabidopsis genome.</title>
        <authorList>
            <person name="Yamada K."/>
            <person name="Lim J."/>
            <person name="Dale J.M."/>
            <person name="Chen H."/>
            <person name="Shinn P."/>
            <person name="Palm C.J."/>
            <person name="Southwick A.M."/>
            <person name="Wu H.C."/>
            <person name="Kim C.J."/>
            <person name="Nguyen M."/>
            <person name="Pham P.K."/>
            <person name="Cheuk R.F."/>
            <person name="Karlin-Newmann G."/>
            <person name="Liu S.X."/>
            <person name="Lam B."/>
            <person name="Sakano H."/>
            <person name="Wu T."/>
            <person name="Yu G."/>
            <person name="Miranda M."/>
            <person name="Quach H.L."/>
            <person name="Tripp M."/>
            <person name="Chang C.H."/>
            <person name="Lee J.M."/>
            <person name="Toriumi M.J."/>
            <person name="Chan M.M."/>
            <person name="Tang C.C."/>
            <person name="Onodera C.S."/>
            <person name="Deng J.M."/>
            <person name="Akiyama K."/>
            <person name="Ansari Y."/>
            <person name="Arakawa T."/>
            <person name="Banh J."/>
            <person name="Banno F."/>
            <person name="Bowser L."/>
            <person name="Brooks S.Y."/>
            <person name="Carninci P."/>
            <person name="Chao Q."/>
            <person name="Choy N."/>
            <person name="Enju A."/>
            <person name="Goldsmith A.D."/>
            <person name="Gurjal M."/>
            <person name="Hansen N.F."/>
            <person name="Hayashizaki Y."/>
            <person name="Johnson-Hopson C."/>
            <person name="Hsuan V.W."/>
            <person name="Iida K."/>
            <person name="Karnes M."/>
            <person name="Khan S."/>
            <person name="Koesema E."/>
            <person name="Ishida J."/>
            <person name="Jiang P.X."/>
            <person name="Jones T."/>
            <person name="Kawai J."/>
            <person name="Kamiya A."/>
            <person name="Meyers C."/>
            <person name="Nakajima M."/>
            <person name="Narusaka M."/>
            <person name="Seki M."/>
            <person name="Sakurai T."/>
            <person name="Satou M."/>
            <person name="Tamse R."/>
            <person name="Vaysberg M."/>
            <person name="Wallender E.K."/>
            <person name="Wong C."/>
            <person name="Yamamura Y."/>
            <person name="Yuan S."/>
            <person name="Shinozaki K."/>
            <person name="Davis R.W."/>
            <person name="Theologis A."/>
            <person name="Ecker J.R."/>
        </authorList>
    </citation>
    <scope>NUCLEOTIDE SEQUENCE [LARGE SCALE MRNA]</scope>
    <source>
        <strain>cv. Columbia</strain>
    </source>
</reference>
<reference key="4">
    <citation type="submission" date="2006-07" db="EMBL/GenBank/DDBJ databases">
        <title>Large-scale analysis of RIKEN Arabidopsis full-length (RAFL) cDNAs.</title>
        <authorList>
            <person name="Totoki Y."/>
            <person name="Seki M."/>
            <person name="Ishida J."/>
            <person name="Nakajima M."/>
            <person name="Enju A."/>
            <person name="Kamiya A."/>
            <person name="Narusaka M."/>
            <person name="Shin-i T."/>
            <person name="Nakagawa M."/>
            <person name="Sakamoto N."/>
            <person name="Oishi K."/>
            <person name="Kohara Y."/>
            <person name="Kobayashi M."/>
            <person name="Toyoda A."/>
            <person name="Sakaki Y."/>
            <person name="Sakurai T."/>
            <person name="Iida K."/>
            <person name="Akiyama K."/>
            <person name="Satou M."/>
            <person name="Toyoda T."/>
            <person name="Konagaya A."/>
            <person name="Carninci P."/>
            <person name="Kawai J."/>
            <person name="Hayashizaki Y."/>
            <person name="Shinozaki K."/>
        </authorList>
    </citation>
    <scope>NUCLEOTIDE SEQUENCE [LARGE SCALE MRNA]</scope>
    <source>
        <strain>cv. Columbia</strain>
    </source>
</reference>